<gene>
    <name evidence="1" type="primary">katG</name>
    <name type="ordered locus">VV1_2755</name>
</gene>
<accession>Q8D951</accession>
<proteinExistence type="inferred from homology"/>
<organism>
    <name type="scientific">Vibrio vulnificus (strain CMCP6)</name>
    <dbReference type="NCBI Taxonomy" id="216895"/>
    <lineage>
        <taxon>Bacteria</taxon>
        <taxon>Pseudomonadati</taxon>
        <taxon>Pseudomonadota</taxon>
        <taxon>Gammaproteobacteria</taxon>
        <taxon>Vibrionales</taxon>
        <taxon>Vibrionaceae</taxon>
        <taxon>Vibrio</taxon>
    </lineage>
</organism>
<name>KATG_VIBVU</name>
<evidence type="ECO:0000255" key="1">
    <source>
        <dbReference type="HAMAP-Rule" id="MF_01961"/>
    </source>
</evidence>
<dbReference type="EC" id="1.11.1.21" evidence="1"/>
<dbReference type="EMBL" id="AE016795">
    <property type="protein sequence ID" value="AAO11099.1"/>
    <property type="molecule type" value="Genomic_DNA"/>
</dbReference>
<dbReference type="RefSeq" id="WP_011080593.1">
    <property type="nucleotide sequence ID" value="NC_004459.3"/>
</dbReference>
<dbReference type="SMR" id="Q8D951"/>
<dbReference type="PeroxiBase" id="2651">
    <property type="entry name" value="VvuCP_CMPCP6"/>
</dbReference>
<dbReference type="KEGG" id="vvu:VV1_2755"/>
<dbReference type="HOGENOM" id="CLU_025424_2_0_6"/>
<dbReference type="Proteomes" id="UP000002275">
    <property type="component" value="Chromosome 1"/>
</dbReference>
<dbReference type="GO" id="GO:0005829">
    <property type="term" value="C:cytosol"/>
    <property type="evidence" value="ECO:0007669"/>
    <property type="project" value="TreeGrafter"/>
</dbReference>
<dbReference type="GO" id="GO:0004096">
    <property type="term" value="F:catalase activity"/>
    <property type="evidence" value="ECO:0007669"/>
    <property type="project" value="UniProtKB-UniRule"/>
</dbReference>
<dbReference type="GO" id="GO:0020037">
    <property type="term" value="F:heme binding"/>
    <property type="evidence" value="ECO:0007669"/>
    <property type="project" value="InterPro"/>
</dbReference>
<dbReference type="GO" id="GO:0046872">
    <property type="term" value="F:metal ion binding"/>
    <property type="evidence" value="ECO:0007669"/>
    <property type="project" value="UniProtKB-KW"/>
</dbReference>
<dbReference type="GO" id="GO:0070301">
    <property type="term" value="P:cellular response to hydrogen peroxide"/>
    <property type="evidence" value="ECO:0007669"/>
    <property type="project" value="TreeGrafter"/>
</dbReference>
<dbReference type="GO" id="GO:0042744">
    <property type="term" value="P:hydrogen peroxide catabolic process"/>
    <property type="evidence" value="ECO:0007669"/>
    <property type="project" value="UniProtKB-KW"/>
</dbReference>
<dbReference type="CDD" id="cd00649">
    <property type="entry name" value="catalase_peroxidase_1"/>
    <property type="match status" value="1"/>
</dbReference>
<dbReference type="CDD" id="cd08200">
    <property type="entry name" value="catalase_peroxidase_2"/>
    <property type="match status" value="1"/>
</dbReference>
<dbReference type="FunFam" id="1.10.420.10:FF:000002">
    <property type="entry name" value="Catalase-peroxidase"/>
    <property type="match status" value="1"/>
</dbReference>
<dbReference type="FunFam" id="1.10.420.10:FF:000004">
    <property type="entry name" value="Catalase-peroxidase"/>
    <property type="match status" value="1"/>
</dbReference>
<dbReference type="FunFam" id="1.10.520.10:FF:000002">
    <property type="entry name" value="Catalase-peroxidase"/>
    <property type="match status" value="1"/>
</dbReference>
<dbReference type="Gene3D" id="1.10.520.10">
    <property type="match status" value="2"/>
</dbReference>
<dbReference type="Gene3D" id="1.10.420.10">
    <property type="entry name" value="Peroxidase, domain 2"/>
    <property type="match status" value="2"/>
</dbReference>
<dbReference type="HAMAP" id="MF_01961">
    <property type="entry name" value="Catal_peroxid"/>
    <property type="match status" value="1"/>
</dbReference>
<dbReference type="InterPro" id="IPR000763">
    <property type="entry name" value="Catalase_peroxidase"/>
</dbReference>
<dbReference type="InterPro" id="IPR002016">
    <property type="entry name" value="Haem_peroxidase"/>
</dbReference>
<dbReference type="InterPro" id="IPR010255">
    <property type="entry name" value="Haem_peroxidase_sf"/>
</dbReference>
<dbReference type="InterPro" id="IPR019794">
    <property type="entry name" value="Peroxidases_AS"/>
</dbReference>
<dbReference type="NCBIfam" id="TIGR00198">
    <property type="entry name" value="cat_per_HPI"/>
    <property type="match status" value="1"/>
</dbReference>
<dbReference type="NCBIfam" id="NF011635">
    <property type="entry name" value="PRK15061.1"/>
    <property type="match status" value="1"/>
</dbReference>
<dbReference type="PANTHER" id="PTHR30555:SF6">
    <property type="entry name" value="CATALASE-PEROXIDASE"/>
    <property type="match status" value="1"/>
</dbReference>
<dbReference type="PANTHER" id="PTHR30555">
    <property type="entry name" value="HYDROPEROXIDASE I, BIFUNCTIONAL CATALASE-PEROXIDASE"/>
    <property type="match status" value="1"/>
</dbReference>
<dbReference type="Pfam" id="PF00141">
    <property type="entry name" value="peroxidase"/>
    <property type="match status" value="2"/>
</dbReference>
<dbReference type="PRINTS" id="PR00460">
    <property type="entry name" value="BPEROXIDASE"/>
</dbReference>
<dbReference type="PRINTS" id="PR00458">
    <property type="entry name" value="PEROXIDASE"/>
</dbReference>
<dbReference type="SUPFAM" id="SSF48113">
    <property type="entry name" value="Heme-dependent peroxidases"/>
    <property type="match status" value="2"/>
</dbReference>
<dbReference type="PROSITE" id="PS00436">
    <property type="entry name" value="PEROXIDASE_2"/>
    <property type="match status" value="1"/>
</dbReference>
<dbReference type="PROSITE" id="PS50873">
    <property type="entry name" value="PEROXIDASE_4"/>
    <property type="match status" value="1"/>
</dbReference>
<keyword id="KW-0349">Heme</keyword>
<keyword id="KW-0376">Hydrogen peroxide</keyword>
<keyword id="KW-0408">Iron</keyword>
<keyword id="KW-0479">Metal-binding</keyword>
<keyword id="KW-0560">Oxidoreductase</keyword>
<keyword id="KW-0575">Peroxidase</keyword>
<sequence>MEHKPTHTSGQCPVMHGGATSSNSSNVAWWPKALNLDILHQHDRKSNPMGADFSYREELKKLDVEALKRDLKTLMTDSQDWWPADWGHYGGLMIRMAWHSAGSYRVGDGRGGADTGNQRFAPLNSWPDNANLDKARRLLWPIKQKYGNKISWADLMILAGNMAYESMGLKTFGFAFGREDIWHPEKDIYWGAEQEWLAPSGAENSRYSGERDLENPLAAVMMGLIYVNPEGVDGNPDPLKTAKDMRVTFARMGMNDEETVALTAGGHTVGKAHGNGNAANLGADPESADLEEQGLGWNNHKSRGIGRDTVTSGIEGAWTTNPTQWDNGFFHLLFSYDWWLQKSPAGAWQWEPVNIKEEDKPVDVEDPTIRHNPIMTDADMALKLDPEYRKISERFHKDPAYFSETFARAWFKLTHRDMGPKARYFGPDVPAETLIWQDPVPTGRKDYDVDAVKAKIIASGLSIGEMVSTAWDSARTFRNSDKRGGANGARIRLAPQKDWLGNEPEKLAKVLNVLEAIASEFNISVADTIVLAGNVGVEQAAKAAGIAITVPFAAGRGDATIEQTDVESFDVLEPIADGFRNWQKQHYAVNPEELLLDRAQLLGLSAPEMTVLIGGLRVLGTNHGGTKHGVFTDNVGALSNDFFVNLTDMRYTWKPTGRNSYDIVERNSGNVKWTATRVDLVFGSNSILRAYAEVYAQDDNKEKFVKDFVAAWTKVMNADRFDI</sequence>
<reference key="1">
    <citation type="submission" date="2002-12" db="EMBL/GenBank/DDBJ databases">
        <title>Complete genome sequence of Vibrio vulnificus CMCP6.</title>
        <authorList>
            <person name="Rhee J.H."/>
            <person name="Kim S.Y."/>
            <person name="Chung S.S."/>
            <person name="Kim J.J."/>
            <person name="Moon Y.H."/>
            <person name="Jeong H."/>
            <person name="Choy H.E."/>
        </authorList>
    </citation>
    <scope>NUCLEOTIDE SEQUENCE [LARGE SCALE GENOMIC DNA]</scope>
    <source>
        <strain>CMCP6</strain>
    </source>
</reference>
<protein>
    <recommendedName>
        <fullName evidence="1">Catalase-peroxidase</fullName>
        <shortName evidence="1">CP</shortName>
        <ecNumber evidence="1">1.11.1.21</ecNumber>
    </recommendedName>
    <alternativeName>
        <fullName evidence="1">Peroxidase/catalase</fullName>
    </alternativeName>
</protein>
<comment type="function">
    <text evidence="1">Bifunctional enzyme with both catalase and broad-spectrum peroxidase activity.</text>
</comment>
<comment type="catalytic activity">
    <reaction evidence="1">
        <text>H2O2 + AH2 = A + 2 H2O</text>
        <dbReference type="Rhea" id="RHEA:30275"/>
        <dbReference type="ChEBI" id="CHEBI:13193"/>
        <dbReference type="ChEBI" id="CHEBI:15377"/>
        <dbReference type="ChEBI" id="CHEBI:16240"/>
        <dbReference type="ChEBI" id="CHEBI:17499"/>
        <dbReference type="EC" id="1.11.1.21"/>
    </reaction>
</comment>
<comment type="catalytic activity">
    <reaction evidence="1">
        <text>2 H2O2 = O2 + 2 H2O</text>
        <dbReference type="Rhea" id="RHEA:20309"/>
        <dbReference type="ChEBI" id="CHEBI:15377"/>
        <dbReference type="ChEBI" id="CHEBI:15379"/>
        <dbReference type="ChEBI" id="CHEBI:16240"/>
        <dbReference type="EC" id="1.11.1.21"/>
    </reaction>
</comment>
<comment type="cofactor">
    <cofactor evidence="1">
        <name>heme b</name>
        <dbReference type="ChEBI" id="CHEBI:60344"/>
    </cofactor>
    <text evidence="1">Binds 1 heme b (iron(II)-protoporphyrin IX) group per dimer.</text>
</comment>
<comment type="subunit">
    <text evidence="1">Homodimer or homotetramer.</text>
</comment>
<comment type="PTM">
    <text evidence="1">Formation of the three residue Trp-Tyr-Met cross-link is important for the catalase, but not the peroxidase activity of the enzyme.</text>
</comment>
<comment type="similarity">
    <text evidence="1">Belongs to the peroxidase family. Peroxidase/catalase subfamily.</text>
</comment>
<feature type="chain" id="PRO_0000354952" description="Catalase-peroxidase">
    <location>
        <begin position="1"/>
        <end position="723"/>
    </location>
</feature>
<feature type="active site" description="Proton acceptor" evidence="1">
    <location>
        <position position="99"/>
    </location>
</feature>
<feature type="binding site" description="axial binding residue" evidence="1">
    <location>
        <position position="267"/>
    </location>
    <ligand>
        <name>heme b</name>
        <dbReference type="ChEBI" id="CHEBI:60344"/>
    </ligand>
    <ligandPart>
        <name>Fe</name>
        <dbReference type="ChEBI" id="CHEBI:18248"/>
    </ligandPart>
</feature>
<feature type="site" description="Transition state stabilizer" evidence="1">
    <location>
        <position position="95"/>
    </location>
</feature>
<feature type="cross-link" description="Tryptophyl-tyrosyl-methioninium (Trp-Tyr) (with M-252)" evidence="1">
    <location>
        <begin position="98"/>
        <end position="226"/>
    </location>
</feature>
<feature type="cross-link" description="Tryptophyl-tyrosyl-methioninium (Tyr-Met) (with W-98)" evidence="1">
    <location>
        <begin position="226"/>
        <end position="252"/>
    </location>
</feature>